<comment type="function">
    <text evidence="1 2">Involved in the production of the bacteriocin subtilosin.</text>
</comment>
<comment type="induction">
    <text evidence="3">Transcription is highly induced by oxygen limitation and is under dual and independent control of Spo0A-AbrB and ResDE.</text>
</comment>
<organism>
    <name type="scientific">Bacillus subtilis (strain 168)</name>
    <dbReference type="NCBI Taxonomy" id="224308"/>
    <lineage>
        <taxon>Bacteria</taxon>
        <taxon>Bacillati</taxon>
        <taxon>Bacillota</taxon>
        <taxon>Bacilli</taxon>
        <taxon>Bacillales</taxon>
        <taxon>Bacillaceae</taxon>
        <taxon>Bacillus</taxon>
    </lineage>
</organism>
<proteinExistence type="evidence at transcript level"/>
<reference key="1">
    <citation type="journal article" date="1997" name="Microbiology">
        <title>The Bacillus subtilis genome from gerBC (311 degrees) to licR (334 degrees).</title>
        <authorList>
            <person name="Presecan E."/>
            <person name="Moszer I."/>
            <person name="Boursier L."/>
            <person name="Cruz Ramos H."/>
            <person name="De La Fuente V."/>
            <person name="Hullo M.-F."/>
            <person name="Lelong C."/>
            <person name="Schleich S."/>
            <person name="Sekowska A."/>
            <person name="Song B.H."/>
            <person name="Villani G."/>
            <person name="Kunst F."/>
            <person name="Danchin A."/>
            <person name="Glaser P."/>
        </authorList>
    </citation>
    <scope>NUCLEOTIDE SEQUENCE [GENOMIC DNA]</scope>
    <source>
        <strain>168</strain>
    </source>
</reference>
<reference key="2">
    <citation type="journal article" date="1997" name="Nature">
        <title>The complete genome sequence of the Gram-positive bacterium Bacillus subtilis.</title>
        <authorList>
            <person name="Kunst F."/>
            <person name="Ogasawara N."/>
            <person name="Moszer I."/>
            <person name="Albertini A.M."/>
            <person name="Alloni G."/>
            <person name="Azevedo V."/>
            <person name="Bertero M.G."/>
            <person name="Bessieres P."/>
            <person name="Bolotin A."/>
            <person name="Borchert S."/>
            <person name="Borriss R."/>
            <person name="Boursier L."/>
            <person name="Brans A."/>
            <person name="Braun M."/>
            <person name="Brignell S.C."/>
            <person name="Bron S."/>
            <person name="Brouillet S."/>
            <person name="Bruschi C.V."/>
            <person name="Caldwell B."/>
            <person name="Capuano V."/>
            <person name="Carter N.M."/>
            <person name="Choi S.-K."/>
            <person name="Codani J.-J."/>
            <person name="Connerton I.F."/>
            <person name="Cummings N.J."/>
            <person name="Daniel R.A."/>
            <person name="Denizot F."/>
            <person name="Devine K.M."/>
            <person name="Duesterhoeft A."/>
            <person name="Ehrlich S.D."/>
            <person name="Emmerson P.T."/>
            <person name="Entian K.-D."/>
            <person name="Errington J."/>
            <person name="Fabret C."/>
            <person name="Ferrari E."/>
            <person name="Foulger D."/>
            <person name="Fritz C."/>
            <person name="Fujita M."/>
            <person name="Fujita Y."/>
            <person name="Fuma S."/>
            <person name="Galizzi A."/>
            <person name="Galleron N."/>
            <person name="Ghim S.-Y."/>
            <person name="Glaser P."/>
            <person name="Goffeau A."/>
            <person name="Golightly E.J."/>
            <person name="Grandi G."/>
            <person name="Guiseppi G."/>
            <person name="Guy B.J."/>
            <person name="Haga K."/>
            <person name="Haiech J."/>
            <person name="Harwood C.R."/>
            <person name="Henaut A."/>
            <person name="Hilbert H."/>
            <person name="Holsappel S."/>
            <person name="Hosono S."/>
            <person name="Hullo M.-F."/>
            <person name="Itaya M."/>
            <person name="Jones L.-M."/>
            <person name="Joris B."/>
            <person name="Karamata D."/>
            <person name="Kasahara Y."/>
            <person name="Klaerr-Blanchard M."/>
            <person name="Klein C."/>
            <person name="Kobayashi Y."/>
            <person name="Koetter P."/>
            <person name="Koningstein G."/>
            <person name="Krogh S."/>
            <person name="Kumano M."/>
            <person name="Kurita K."/>
            <person name="Lapidus A."/>
            <person name="Lardinois S."/>
            <person name="Lauber J."/>
            <person name="Lazarevic V."/>
            <person name="Lee S.-M."/>
            <person name="Levine A."/>
            <person name="Liu H."/>
            <person name="Masuda S."/>
            <person name="Mauel C."/>
            <person name="Medigue C."/>
            <person name="Medina N."/>
            <person name="Mellado R.P."/>
            <person name="Mizuno M."/>
            <person name="Moestl D."/>
            <person name="Nakai S."/>
            <person name="Noback M."/>
            <person name="Noone D."/>
            <person name="O'Reilly M."/>
            <person name="Ogawa K."/>
            <person name="Ogiwara A."/>
            <person name="Oudega B."/>
            <person name="Park S.-H."/>
            <person name="Parro V."/>
            <person name="Pohl T.M."/>
            <person name="Portetelle D."/>
            <person name="Porwollik S."/>
            <person name="Prescott A.M."/>
            <person name="Presecan E."/>
            <person name="Pujic P."/>
            <person name="Purnelle B."/>
            <person name="Rapoport G."/>
            <person name="Rey M."/>
            <person name="Reynolds S."/>
            <person name="Rieger M."/>
            <person name="Rivolta C."/>
            <person name="Rocha E."/>
            <person name="Roche B."/>
            <person name="Rose M."/>
            <person name="Sadaie Y."/>
            <person name="Sato T."/>
            <person name="Scanlan E."/>
            <person name="Schleich S."/>
            <person name="Schroeter R."/>
            <person name="Scoffone F."/>
            <person name="Sekiguchi J."/>
            <person name="Sekowska A."/>
            <person name="Seror S.J."/>
            <person name="Serror P."/>
            <person name="Shin B.-S."/>
            <person name="Soldo B."/>
            <person name="Sorokin A."/>
            <person name="Tacconi E."/>
            <person name="Takagi T."/>
            <person name="Takahashi H."/>
            <person name="Takemaru K."/>
            <person name="Takeuchi M."/>
            <person name="Tamakoshi A."/>
            <person name="Tanaka T."/>
            <person name="Terpstra P."/>
            <person name="Tognoni A."/>
            <person name="Tosato V."/>
            <person name="Uchiyama S."/>
            <person name="Vandenbol M."/>
            <person name="Vannier F."/>
            <person name="Vassarotti A."/>
            <person name="Viari A."/>
            <person name="Wambutt R."/>
            <person name="Wedler E."/>
            <person name="Wedler H."/>
            <person name="Weitzenegger T."/>
            <person name="Winters P."/>
            <person name="Wipat A."/>
            <person name="Yamamoto H."/>
            <person name="Yamane K."/>
            <person name="Yasumoto K."/>
            <person name="Yata K."/>
            <person name="Yoshida K."/>
            <person name="Yoshikawa H.-F."/>
            <person name="Zumstein E."/>
            <person name="Yoshikawa H."/>
            <person name="Danchin A."/>
        </authorList>
    </citation>
    <scope>NUCLEOTIDE SEQUENCE [LARGE SCALE GENOMIC DNA]</scope>
    <source>
        <strain>168</strain>
    </source>
</reference>
<reference key="3">
    <citation type="journal article" date="1999" name="J. Bacteriol.">
        <title>Genes of the sbo-alb locus of Bacillus subtilis are required for production of the antilisterial bacteriocin subtilosin.</title>
        <authorList>
            <person name="Zheng G."/>
            <person name="Yan L.Z."/>
            <person name="Vederas J.C."/>
            <person name="Zuber P."/>
        </authorList>
    </citation>
    <scope>FUNCTION</scope>
    <source>
        <strain>168 / JH642</strain>
        <strain>22a</strain>
    </source>
</reference>
<reference key="4">
    <citation type="journal article" date="2000" name="J. Bacteriol.">
        <title>Mutational analysis of the sbo-alb locus of Bacillus subtilis: identification of genes required for subtilosin production and immunity.</title>
        <authorList>
            <person name="Zheng G."/>
            <person name="Hehn R."/>
            <person name="Zuber P."/>
        </authorList>
    </citation>
    <scope>FUNCTION</scope>
    <source>
        <strain>168 / JH642</strain>
    </source>
</reference>
<reference key="5">
    <citation type="journal article" date="2000" name="J. Bacteriol.">
        <title>Dual control of sbo-alb operon expression by the Spo0 and ResDE systems of signal transduction under anaerobic conditions in Bacillus subtilis.</title>
        <authorList>
            <person name="Nakano M.M."/>
            <person name="Zheng G."/>
            <person name="Zuber P."/>
        </authorList>
    </citation>
    <scope>TRANSCRIPTIONAL REGULATION</scope>
    <source>
        <strain>168 / JH642</strain>
    </source>
</reference>
<accession>P71007</accession>
<gene>
    <name type="primary">albE</name>
    <name type="synonym">ywhO</name>
    <name type="ordered locus">BSU37410</name>
</gene>
<protein>
    <recommendedName>
        <fullName>Antilisterial bacteriocin subtilosin biosynthesis protein AlbE</fullName>
    </recommendedName>
</protein>
<feature type="chain" id="PRO_0000064546" description="Antilisterial bacteriocin subtilosin biosynthesis protein AlbE">
    <location>
        <begin position="1"/>
        <end position="386"/>
    </location>
</feature>
<evidence type="ECO:0000269" key="1">
    <source>
    </source>
</evidence>
<evidence type="ECO:0000269" key="2">
    <source>
    </source>
</evidence>
<evidence type="ECO:0000269" key="3">
    <source>
    </source>
</evidence>
<keyword id="KW-0045">Antibiotic biosynthesis</keyword>
<keyword id="KW-0871">Bacteriocin biosynthesis</keyword>
<keyword id="KW-1185">Reference proteome</keyword>
<name>ALBE_BACSU</name>
<sequence length="386" mass="43361">MEVNLLKTHQFSTISIAASFLKPIESAAEPEEETIYFYGAAAYLKEQIIDAFGYAAGSRFMYSANLFFDQQLKTCGTRLIHPLYNGNLHVDALMKTFADLSFPSSLSFEAFEKARNELLLKIEKKFTDPFSYSAARLAEEVFGNPMYGTGMFGRRDRIKAIHPKRFLDATDFIVDLVSQQKQLNILGQVQACDVRGHAPQTSAVTSGRIPVNRHVFETETRSAAGPSVLTLGFDCGEMKDASDYIKIQLIDGLLGKYGHSALFKHFREKDLAVYHVITRYDVMNNLLLVSICTDQLHEKDIPPRVLEAVSAFHTDERELEQAKQFLRNELLLQFDSPEGLLAYMGVLRRFSCTKEALLDGISAVTCRDVLQFIATINYIGAHVVRG</sequence>
<dbReference type="EMBL" id="Z80360">
    <property type="protein sequence ID" value="CAB02505.1"/>
    <property type="molecule type" value="Genomic_DNA"/>
</dbReference>
<dbReference type="EMBL" id="AL009126">
    <property type="protein sequence ID" value="CAB15768.1"/>
    <property type="molecule type" value="Genomic_DNA"/>
</dbReference>
<dbReference type="PIR" id="F70058">
    <property type="entry name" value="F70058"/>
</dbReference>
<dbReference type="RefSeq" id="NP_391621.1">
    <property type="nucleotide sequence ID" value="NC_000964.3"/>
</dbReference>
<dbReference type="RefSeq" id="WP_010886633.1">
    <property type="nucleotide sequence ID" value="NZ_OZ025638.1"/>
</dbReference>
<dbReference type="SMR" id="P71007"/>
<dbReference type="FunCoup" id="P71007">
    <property type="interactions" value="24"/>
</dbReference>
<dbReference type="STRING" id="224308.BSU37410"/>
<dbReference type="PaxDb" id="224308-BSU37410"/>
<dbReference type="EnsemblBacteria" id="CAB15768">
    <property type="protein sequence ID" value="CAB15768"/>
    <property type="gene ID" value="BSU_37410"/>
</dbReference>
<dbReference type="GeneID" id="938514"/>
<dbReference type="KEGG" id="bsu:BSU37410"/>
<dbReference type="PATRIC" id="fig|224308.43.peg.3921"/>
<dbReference type="eggNOG" id="COG0612">
    <property type="taxonomic scope" value="Bacteria"/>
</dbReference>
<dbReference type="InParanoid" id="P71007"/>
<dbReference type="OrthoDB" id="9762085at2"/>
<dbReference type="PhylomeDB" id="P71007"/>
<dbReference type="BioCyc" id="BSUB:BSU37410-MONOMER"/>
<dbReference type="Proteomes" id="UP000001570">
    <property type="component" value="Chromosome"/>
</dbReference>
<dbReference type="GO" id="GO:0046872">
    <property type="term" value="F:metal ion binding"/>
    <property type="evidence" value="ECO:0007669"/>
    <property type="project" value="InterPro"/>
</dbReference>
<dbReference type="GO" id="GO:0030152">
    <property type="term" value="P:bacteriocin biosynthetic process"/>
    <property type="evidence" value="ECO:0007669"/>
    <property type="project" value="UniProtKB-KW"/>
</dbReference>
<dbReference type="Gene3D" id="3.30.830.10">
    <property type="entry name" value="Metalloenzyme, LuxS/M16 peptidase-like"/>
    <property type="match status" value="2"/>
</dbReference>
<dbReference type="InterPro" id="IPR011249">
    <property type="entry name" value="Metalloenz_LuxS/M16"/>
</dbReference>
<dbReference type="InterPro" id="IPR007863">
    <property type="entry name" value="Peptidase_M16_C"/>
</dbReference>
<dbReference type="Pfam" id="PF05193">
    <property type="entry name" value="Peptidase_M16_C"/>
    <property type="match status" value="1"/>
</dbReference>
<dbReference type="SUPFAM" id="SSF63411">
    <property type="entry name" value="LuxS/MPP-like metallohydrolase"/>
    <property type="match status" value="2"/>
</dbReference>